<gene>
    <name evidence="6" type="primary">CMT1</name>
    <name type="ordered locus">CNG04090</name>
</gene>
<evidence type="ECO:0000255" key="1"/>
<evidence type="ECO:0000256" key="2">
    <source>
        <dbReference type="SAM" id="MobiDB-lite"/>
    </source>
</evidence>
<evidence type="ECO:0000269" key="3">
    <source>
    </source>
</evidence>
<evidence type="ECO:0000305" key="4"/>
<evidence type="ECO:0000305" key="5">
    <source>
    </source>
</evidence>
<evidence type="ECO:0000312" key="6">
    <source>
        <dbReference type="EMBL" id="AAQ86764.1"/>
    </source>
</evidence>
<name>CMT1_CRYNJ</name>
<protein>
    <recommendedName>
        <fullName>Alpha-1,3-mannosyltransferase CMT1</fullName>
        <ecNumber>2.4.1.-</ecNumber>
    </recommendedName>
</protein>
<organism>
    <name type="scientific">Cryptococcus neoformans var. neoformans serotype D (strain JEC21 / ATCC MYA-565)</name>
    <name type="common">Filobasidiella neoformans</name>
    <dbReference type="NCBI Taxonomy" id="214684"/>
    <lineage>
        <taxon>Eukaryota</taxon>
        <taxon>Fungi</taxon>
        <taxon>Dikarya</taxon>
        <taxon>Basidiomycota</taxon>
        <taxon>Agaricomycotina</taxon>
        <taxon>Tremellomycetes</taxon>
        <taxon>Tremellales</taxon>
        <taxon>Cryptococcaceae</taxon>
        <taxon>Cryptococcus</taxon>
        <taxon>Cryptococcus neoformans species complex</taxon>
    </lineage>
</organism>
<reference evidence="4 6" key="1">
    <citation type="journal article" date="2003" name="J. Biol. Chem.">
        <title>An alpha-1,3-mannosyltransferase of Cryptococcus neoformans.</title>
        <authorList>
            <person name="Sommer U."/>
            <person name="Liu H."/>
            <person name="Doering T.L."/>
        </authorList>
    </citation>
    <scope>NUCLEOTIDE SEQUENCE [MRNA]</scope>
    <scope>PROTEIN SEQUENCE OF 74-93; 220-235 AND 327-332</scope>
    <scope>FUNCTION</scope>
    <scope>SUBCELLULAR LOCATION</scope>
    <source>
        <strain>JEC21 / ATCC MYA-565</strain>
    </source>
</reference>
<reference key="2">
    <citation type="journal article" date="2005" name="Science">
        <title>The genome of the basidiomycetous yeast and human pathogen Cryptococcus neoformans.</title>
        <authorList>
            <person name="Loftus B.J."/>
            <person name="Fung E."/>
            <person name="Roncaglia P."/>
            <person name="Rowley D."/>
            <person name="Amedeo P."/>
            <person name="Bruno D."/>
            <person name="Vamathevan J."/>
            <person name="Miranda M."/>
            <person name="Anderson I.J."/>
            <person name="Fraser J.A."/>
            <person name="Allen J.E."/>
            <person name="Bosdet I.E."/>
            <person name="Brent M.R."/>
            <person name="Chiu R."/>
            <person name="Doering T.L."/>
            <person name="Donlin M.J."/>
            <person name="D'Souza C.A."/>
            <person name="Fox D.S."/>
            <person name="Grinberg V."/>
            <person name="Fu J."/>
            <person name="Fukushima M."/>
            <person name="Haas B.J."/>
            <person name="Huang J.C."/>
            <person name="Janbon G."/>
            <person name="Jones S.J.M."/>
            <person name="Koo H.L."/>
            <person name="Krzywinski M.I."/>
            <person name="Kwon-Chung K.J."/>
            <person name="Lengeler K.B."/>
            <person name="Maiti R."/>
            <person name="Marra M.A."/>
            <person name="Marra R.E."/>
            <person name="Mathewson C.A."/>
            <person name="Mitchell T.G."/>
            <person name="Pertea M."/>
            <person name="Riggs F.R."/>
            <person name="Salzberg S.L."/>
            <person name="Schein J.E."/>
            <person name="Shvartsbeyn A."/>
            <person name="Shin H."/>
            <person name="Shumway M."/>
            <person name="Specht C.A."/>
            <person name="Suh B.B."/>
            <person name="Tenney A."/>
            <person name="Utterback T.R."/>
            <person name="Wickes B.L."/>
            <person name="Wortman J.R."/>
            <person name="Wye N.H."/>
            <person name="Kronstad J.W."/>
            <person name="Lodge J.K."/>
            <person name="Heitman J."/>
            <person name="Davis R.W."/>
            <person name="Fraser C.M."/>
            <person name="Hyman R.W."/>
        </authorList>
    </citation>
    <scope>NUCLEOTIDE SEQUENCE [LARGE SCALE GENOMIC DNA]</scope>
    <source>
        <strain>JEC21 / ATCC MYA-565</strain>
    </source>
</reference>
<sequence>MFRNTLRTFPRPATPSLPTSSHSPIARASLSKSPLFVLSLVLVCIFFLSFLSHPDPSARKLQWPGLFPSPSPSVIHTKDLFLERALNATSEAFREICPSAGDPVHLDPDLTEAQKKRYLPLKRSKRGRYLLVTNTRQIEAHLPDLLNTLIVLLRYLAPEHLAVSILEGPSSDCTQKAIEQVLKPMLDDQGLESAWTRIETGESKIDWGKHNRIEKIAELRNTALAPLWQGEGDQKWEDEIEAVVFFNDVYLHAADILELVYQHVKNGAGITTAMDWWKKRPEYYYDVWVGRTIDTGDLFYPIDNPWWSPSSDLFPNSPNSRNAYSRLEPFQVFSSWNALAVLSPKPFLPPHNVRFRRGDVEKGECAASECTLIATDFWKAGFGKVAVVPSVQLAYERDVAKDIIEDVGKQKEQLGWIDGVPPEHLDDKIEWSTKPPKKVRCHPWPEVNGLSANVWEETRWVQPWLE</sequence>
<accession>Q6U1Z4</accession>
<accession>Q5KDG4</accession>
<proteinExistence type="evidence at protein level"/>
<keyword id="KW-0903">Direct protein sequencing</keyword>
<keyword id="KW-0328">Glycosyltransferase</keyword>
<keyword id="KW-0333">Golgi apparatus</keyword>
<keyword id="KW-0472">Membrane</keyword>
<keyword id="KW-1185">Reference proteome</keyword>
<keyword id="KW-0735">Signal-anchor</keyword>
<keyword id="KW-0808">Transferase</keyword>
<keyword id="KW-0812">Transmembrane</keyword>
<keyword id="KW-1133">Transmembrane helix</keyword>
<comment type="function">
    <text evidence="3">Responsible for addition of mannose residues in an alpha-1,3 linkage to a polymannosly precursor. May be involved in synthesis of capsule glucuronoxylomannan.</text>
</comment>
<comment type="cofactor">
    <cofactor>
        <name>Mg(2+)</name>
        <dbReference type="ChEBI" id="CHEBI:18420"/>
    </cofactor>
    <cofactor>
        <name>Mn(2+)</name>
        <dbReference type="ChEBI" id="CHEBI:29035"/>
    </cofactor>
    <cofactor>
        <name>Co(2+)</name>
        <dbReference type="ChEBI" id="CHEBI:48828"/>
    </cofactor>
    <text>Divalent metal cations. Mg(2+), Mn(2+) or Co(2+) can be used.</text>
</comment>
<comment type="pathway">
    <text>Protein modification; protein glycosylation.</text>
</comment>
<comment type="subcellular location">
    <subcellularLocation>
        <location evidence="5">Golgi apparatus membrane</location>
        <topology evidence="5">Single-pass type II membrane protein</topology>
    </subcellularLocation>
</comment>
<feature type="chain" id="PRO_0000080584" description="Alpha-1,3-mannosyltransferase CMT1">
    <location>
        <begin position="1"/>
        <end position="466"/>
    </location>
</feature>
<feature type="topological domain" description="Cytoplasmic" evidence="1">
    <location>
        <begin position="1"/>
        <end position="33"/>
    </location>
</feature>
<feature type="transmembrane region" description="Helical; Signal-anchor for type II membrane protein" evidence="1">
    <location>
        <begin position="34"/>
        <end position="54"/>
    </location>
</feature>
<feature type="topological domain" description="Lumenal" evidence="1">
    <location>
        <begin position="55"/>
        <end position="466"/>
    </location>
</feature>
<feature type="region of interest" description="Disordered" evidence="2">
    <location>
        <begin position="1"/>
        <end position="23"/>
    </location>
</feature>
<dbReference type="EC" id="2.4.1.-"/>
<dbReference type="EMBL" id="AY380340">
    <property type="protein sequence ID" value="AAQ86764.1"/>
    <property type="molecule type" value="mRNA"/>
</dbReference>
<dbReference type="EMBL" id="AE017347">
    <property type="protein sequence ID" value="AAW44851.1"/>
    <property type="molecule type" value="Genomic_DNA"/>
</dbReference>
<dbReference type="RefSeq" id="XP_572158.1">
    <property type="nucleotide sequence ID" value="XM_572158.1"/>
</dbReference>
<dbReference type="STRING" id="214684.Q6U1Z4"/>
<dbReference type="CAZy" id="GT69">
    <property type="family name" value="Glycosyltransferase Family 69"/>
</dbReference>
<dbReference type="PaxDb" id="214684-Q6U1Z4"/>
<dbReference type="EnsemblFungi" id="AAW44851">
    <property type="protein sequence ID" value="AAW44851"/>
    <property type="gene ID" value="CNG04090"/>
</dbReference>
<dbReference type="GeneID" id="3258835"/>
<dbReference type="KEGG" id="cne:CNG04090"/>
<dbReference type="VEuPathDB" id="FungiDB:CNG04090"/>
<dbReference type="eggNOG" id="ENOG502QRBX">
    <property type="taxonomic scope" value="Eukaryota"/>
</dbReference>
<dbReference type="HOGENOM" id="CLU_036740_0_0_1"/>
<dbReference type="InParanoid" id="Q6U1Z4"/>
<dbReference type="OMA" id="CYMGEPT"/>
<dbReference type="OrthoDB" id="262547at2759"/>
<dbReference type="UniPathway" id="UPA00378"/>
<dbReference type="Proteomes" id="UP000002149">
    <property type="component" value="Chromosome 7"/>
</dbReference>
<dbReference type="GO" id="GO:0000139">
    <property type="term" value="C:Golgi membrane"/>
    <property type="evidence" value="ECO:0007669"/>
    <property type="project" value="UniProtKB-SubCell"/>
</dbReference>
<dbReference type="GO" id="GO:0016757">
    <property type="term" value="F:glycosyltransferase activity"/>
    <property type="evidence" value="ECO:0007669"/>
    <property type="project" value="UniProtKB-KW"/>
</dbReference>
<dbReference type="GO" id="GO:0006486">
    <property type="term" value="P:protein glycosylation"/>
    <property type="evidence" value="ECO:0007669"/>
    <property type="project" value="UniProtKB-UniPathway"/>
</dbReference>
<dbReference type="InterPro" id="IPR021047">
    <property type="entry name" value="Mannosyltransferase_CMT1"/>
</dbReference>
<dbReference type="PANTHER" id="PTHR34144:SF5">
    <property type="entry name" value="ALPHA-1,3-MANNOSYLTRANSFERASE CMT1"/>
    <property type="match status" value="1"/>
</dbReference>
<dbReference type="PANTHER" id="PTHR34144">
    <property type="entry name" value="CHROMOSOME 8, WHOLE GENOME SHOTGUN SEQUENCE"/>
    <property type="match status" value="1"/>
</dbReference>
<dbReference type="Pfam" id="PF11735">
    <property type="entry name" value="CAP59_mtransfer"/>
    <property type="match status" value="1"/>
</dbReference>